<evidence type="ECO:0000255" key="1">
    <source>
        <dbReference type="HAMAP-Rule" id="MF_01373"/>
    </source>
</evidence>
<gene>
    <name evidence="1" type="primary">lpqB</name>
    <name type="ordered locus">cgR_0865</name>
</gene>
<comment type="subcellular location">
    <subcellularLocation>
        <location evidence="1">Cell membrane</location>
        <topology evidence="1">Lipid-anchor</topology>
    </subcellularLocation>
</comment>
<comment type="similarity">
    <text evidence="1">Belongs to the LpqB lipoprotein family.</text>
</comment>
<name>LPQB_CORGB</name>
<dbReference type="EMBL" id="AP009044">
    <property type="protein sequence ID" value="BAF53838.1"/>
    <property type="molecule type" value="Genomic_DNA"/>
</dbReference>
<dbReference type="RefSeq" id="WP_011896901.1">
    <property type="nucleotide sequence ID" value="NC_009342.1"/>
</dbReference>
<dbReference type="KEGG" id="cgt:cgR_0865"/>
<dbReference type="HOGENOM" id="CLU_032207_1_0_11"/>
<dbReference type="Proteomes" id="UP000006698">
    <property type="component" value="Chromosome"/>
</dbReference>
<dbReference type="GO" id="GO:0005886">
    <property type="term" value="C:plasma membrane"/>
    <property type="evidence" value="ECO:0007669"/>
    <property type="project" value="UniProtKB-SubCell"/>
</dbReference>
<dbReference type="HAMAP" id="MF_01373">
    <property type="entry name" value="LpqB_lipoprot"/>
    <property type="match status" value="1"/>
</dbReference>
<dbReference type="InterPro" id="IPR019606">
    <property type="entry name" value="GerMN"/>
</dbReference>
<dbReference type="InterPro" id="IPR023959">
    <property type="entry name" value="Lipoprotein_LpqB"/>
</dbReference>
<dbReference type="InterPro" id="IPR018910">
    <property type="entry name" value="Lipoprotein_LpqB_C"/>
</dbReference>
<dbReference type="NCBIfam" id="NF010141">
    <property type="entry name" value="PRK13616.1"/>
    <property type="match status" value="1"/>
</dbReference>
<dbReference type="Pfam" id="PF10646">
    <property type="entry name" value="Germane"/>
    <property type="match status" value="1"/>
</dbReference>
<dbReference type="Pfam" id="PF10647">
    <property type="entry name" value="Gmad1"/>
    <property type="match status" value="1"/>
</dbReference>
<dbReference type="SMART" id="SM00909">
    <property type="entry name" value="Germane"/>
    <property type="match status" value="1"/>
</dbReference>
<dbReference type="PROSITE" id="PS51257">
    <property type="entry name" value="PROKAR_LIPOPROTEIN"/>
    <property type="match status" value="1"/>
</dbReference>
<protein>
    <recommendedName>
        <fullName evidence="1">Lipoprotein LpqB</fullName>
    </recommendedName>
</protein>
<organism>
    <name type="scientific">Corynebacterium glutamicum (strain R)</name>
    <dbReference type="NCBI Taxonomy" id="340322"/>
    <lineage>
        <taxon>Bacteria</taxon>
        <taxon>Bacillati</taxon>
        <taxon>Actinomycetota</taxon>
        <taxon>Actinomycetes</taxon>
        <taxon>Mycobacteriales</taxon>
        <taxon>Corynebacteriaceae</taxon>
        <taxon>Corynebacterium</taxon>
    </lineage>
</organism>
<feature type="signal peptide" evidence="1">
    <location>
        <begin position="1"/>
        <end position="23"/>
    </location>
</feature>
<feature type="chain" id="PRO_1000068204" description="Lipoprotein LpqB">
    <location>
        <begin position="24"/>
        <end position="568"/>
    </location>
</feature>
<feature type="lipid moiety-binding region" description="N-palmitoyl cysteine" evidence="1">
    <location>
        <position position="24"/>
    </location>
</feature>
<feature type="lipid moiety-binding region" description="S-diacylglycerol cysteine" evidence="1">
    <location>
        <position position="24"/>
    </location>
</feature>
<proteinExistence type="inferred from homology"/>
<sequence>MSKISTKLKALSAVLSVTTLVAGCSTLPQNTDPQVLRSFSGSQSTQEIAGPTPNQDPDLLIRGFFSAGAYPTQQYEAAKAYLTEGTRSTWNPAASTRILDRIDLNTLPGSTNAERTIAIRGTQVGTLLSGGVYQPENAEFEAEITMRREDGEWRIDALPDGILLERNDLRNHYTPHDVYFFDPSGQVLVGDRRWLFNESQSMSTVLMALLVNGPSPAISPGVVNQLSTDASFVGFNDGEYQFTGLGNLDDDARLRFAAQAVWTLAHADVAGPYTLVADGAPLLSEFPTLTTDDLAEYNPEAYTNTVSTLFALQDGSLSRVSSGNVSPLQGIWSGGDIDSAAISSSANVVAAVRHESNEAVLTVGSMEGVTSDVLRSETITRPTFEYASSGLWAVVDGETPVRVARSATTGELVQTEAEIVLPRDVTGPISEFQLSRTGVRAAMIIEGKVYVGVVTRPGPGERRVTNITEVAPSLGEAALSINWRPDGILLVGTSIPETPLWRVEQDGSAISSTPSGNLSAPVVAVASSATTIYVTDSHAMLQLPTADNDIWREVPGLLGTRAAPVVAY</sequence>
<reference key="1">
    <citation type="journal article" date="2007" name="Microbiology">
        <title>Comparative analysis of the Corynebacterium glutamicum group and complete genome sequence of strain R.</title>
        <authorList>
            <person name="Yukawa H."/>
            <person name="Omumasaba C.A."/>
            <person name="Nonaka H."/>
            <person name="Kos P."/>
            <person name="Okai N."/>
            <person name="Suzuki N."/>
            <person name="Suda M."/>
            <person name="Tsuge Y."/>
            <person name="Watanabe J."/>
            <person name="Ikeda Y."/>
            <person name="Vertes A.A."/>
            <person name="Inui M."/>
        </authorList>
    </citation>
    <scope>NUCLEOTIDE SEQUENCE [LARGE SCALE GENOMIC DNA]</scope>
    <source>
        <strain>R</strain>
    </source>
</reference>
<accession>A4QC91</accession>
<keyword id="KW-1003">Cell membrane</keyword>
<keyword id="KW-0449">Lipoprotein</keyword>
<keyword id="KW-0472">Membrane</keyword>
<keyword id="KW-0564">Palmitate</keyword>
<keyword id="KW-0732">Signal</keyword>